<evidence type="ECO:0000255" key="1">
    <source>
        <dbReference type="HAMAP-Rule" id="MF_01369"/>
    </source>
</evidence>
<evidence type="ECO:0000305" key="2"/>
<reference key="1">
    <citation type="submission" date="2007-02" db="EMBL/GenBank/DDBJ databases">
        <title>Complete sequence of chromosome 1 of Rhodobacter sphaeroides ATCC 17029.</title>
        <authorList>
            <person name="Copeland A."/>
            <person name="Lucas S."/>
            <person name="Lapidus A."/>
            <person name="Barry K."/>
            <person name="Detter J.C."/>
            <person name="Glavina del Rio T."/>
            <person name="Hammon N."/>
            <person name="Israni S."/>
            <person name="Dalin E."/>
            <person name="Tice H."/>
            <person name="Pitluck S."/>
            <person name="Kiss H."/>
            <person name="Brettin T."/>
            <person name="Bruce D."/>
            <person name="Han C."/>
            <person name="Tapia R."/>
            <person name="Gilna P."/>
            <person name="Schmutz J."/>
            <person name="Larimer F."/>
            <person name="Land M."/>
            <person name="Hauser L."/>
            <person name="Kyrpides N."/>
            <person name="Mikhailova N."/>
            <person name="Richardson P."/>
            <person name="Mackenzie C."/>
            <person name="Choudhary M."/>
            <person name="Donohue T.J."/>
            <person name="Kaplan S."/>
        </authorList>
    </citation>
    <scope>NUCLEOTIDE SEQUENCE [LARGE SCALE GENOMIC DNA]</scope>
    <source>
        <strain>ATCC 17029 / ATH 2.4.9</strain>
    </source>
</reference>
<dbReference type="EMBL" id="CP000577">
    <property type="protein sequence ID" value="ABN75479.1"/>
    <property type="molecule type" value="Genomic_DNA"/>
</dbReference>
<dbReference type="RefSeq" id="WP_002722494.1">
    <property type="nucleotide sequence ID" value="NC_009049.1"/>
</dbReference>
<dbReference type="SMR" id="A3PGL3"/>
<dbReference type="KEGG" id="rsh:Rsph17029_0363"/>
<dbReference type="HOGENOM" id="CLU_037562_3_1_5"/>
<dbReference type="GO" id="GO:1990904">
    <property type="term" value="C:ribonucleoprotein complex"/>
    <property type="evidence" value="ECO:0007669"/>
    <property type="project" value="UniProtKB-KW"/>
</dbReference>
<dbReference type="GO" id="GO:0005840">
    <property type="term" value="C:ribosome"/>
    <property type="evidence" value="ECO:0007669"/>
    <property type="project" value="UniProtKB-KW"/>
</dbReference>
<dbReference type="GO" id="GO:0019843">
    <property type="term" value="F:rRNA binding"/>
    <property type="evidence" value="ECO:0007669"/>
    <property type="project" value="UniProtKB-UniRule"/>
</dbReference>
<dbReference type="GO" id="GO:0003735">
    <property type="term" value="F:structural constituent of ribosome"/>
    <property type="evidence" value="ECO:0007669"/>
    <property type="project" value="InterPro"/>
</dbReference>
<dbReference type="GO" id="GO:0006412">
    <property type="term" value="P:translation"/>
    <property type="evidence" value="ECO:0007669"/>
    <property type="project" value="UniProtKB-UniRule"/>
</dbReference>
<dbReference type="FunFam" id="3.30.70.330:FF:000001">
    <property type="entry name" value="50S ribosomal protein L23"/>
    <property type="match status" value="1"/>
</dbReference>
<dbReference type="Gene3D" id="3.30.70.330">
    <property type="match status" value="1"/>
</dbReference>
<dbReference type="HAMAP" id="MF_01369_B">
    <property type="entry name" value="Ribosomal_uL23_B"/>
    <property type="match status" value="1"/>
</dbReference>
<dbReference type="InterPro" id="IPR012677">
    <property type="entry name" value="Nucleotide-bd_a/b_plait_sf"/>
</dbReference>
<dbReference type="InterPro" id="IPR013025">
    <property type="entry name" value="Ribosomal_uL23-like"/>
</dbReference>
<dbReference type="InterPro" id="IPR012678">
    <property type="entry name" value="Ribosomal_uL23/eL15/eS24_sf"/>
</dbReference>
<dbReference type="NCBIfam" id="NF004359">
    <property type="entry name" value="PRK05738.1-3"/>
    <property type="match status" value="1"/>
</dbReference>
<dbReference type="NCBIfam" id="NF004360">
    <property type="entry name" value="PRK05738.1-5"/>
    <property type="match status" value="1"/>
</dbReference>
<dbReference type="NCBIfam" id="NF004363">
    <property type="entry name" value="PRK05738.2-4"/>
    <property type="match status" value="1"/>
</dbReference>
<dbReference type="PANTHER" id="PTHR11620">
    <property type="entry name" value="60S RIBOSOMAL PROTEIN L23A"/>
    <property type="match status" value="1"/>
</dbReference>
<dbReference type="Pfam" id="PF00276">
    <property type="entry name" value="Ribosomal_L23"/>
    <property type="match status" value="1"/>
</dbReference>
<dbReference type="SUPFAM" id="SSF54189">
    <property type="entry name" value="Ribosomal proteins S24e, L23 and L15e"/>
    <property type="match status" value="1"/>
</dbReference>
<accession>A3PGL3</accession>
<gene>
    <name evidence="1" type="primary">rplW</name>
    <name type="ordered locus">Rsph17029_0363</name>
</gene>
<feature type="chain" id="PRO_1000068145" description="Large ribosomal subunit protein uL23">
    <location>
        <begin position="1"/>
        <end position="98"/>
    </location>
</feature>
<protein>
    <recommendedName>
        <fullName evidence="1">Large ribosomal subunit protein uL23</fullName>
    </recommendedName>
    <alternativeName>
        <fullName evidence="2">50S ribosomal protein L23</fullName>
    </alternativeName>
</protein>
<proteinExistence type="inferred from homology"/>
<sequence length="98" mass="10693">MTAKPEHYDVIRKPVITEKATMTSEANGVVFAVAMEATKPQIKEAVEAIFNVKVKAVNTVVTKGKTKKFKGRPGVRSDRKKAYVTLEEGNTIDVSTGL</sequence>
<name>RL23_CERS1</name>
<keyword id="KW-0687">Ribonucleoprotein</keyword>
<keyword id="KW-0689">Ribosomal protein</keyword>
<keyword id="KW-0694">RNA-binding</keyword>
<keyword id="KW-0699">rRNA-binding</keyword>
<comment type="function">
    <text evidence="1">One of the early assembly proteins it binds 23S rRNA. One of the proteins that surrounds the polypeptide exit tunnel on the outside of the ribosome. Forms the main docking site for trigger factor binding to the ribosome.</text>
</comment>
<comment type="subunit">
    <text evidence="1">Part of the 50S ribosomal subunit. Contacts protein L29, and trigger factor when it is bound to the ribosome.</text>
</comment>
<comment type="similarity">
    <text evidence="1">Belongs to the universal ribosomal protein uL23 family.</text>
</comment>
<organism>
    <name type="scientific">Cereibacter sphaeroides (strain ATCC 17029 / ATH 2.4.9)</name>
    <name type="common">Rhodobacter sphaeroides</name>
    <dbReference type="NCBI Taxonomy" id="349101"/>
    <lineage>
        <taxon>Bacteria</taxon>
        <taxon>Pseudomonadati</taxon>
        <taxon>Pseudomonadota</taxon>
        <taxon>Alphaproteobacteria</taxon>
        <taxon>Rhodobacterales</taxon>
        <taxon>Paracoccaceae</taxon>
        <taxon>Cereibacter</taxon>
    </lineage>
</organism>